<keyword id="KW-0687">Ribonucleoprotein</keyword>
<keyword id="KW-0689">Ribosomal protein</keyword>
<organism>
    <name type="scientific">Streptococcus thermophilus (strain ATCC BAA-491 / LMD-9)</name>
    <dbReference type="NCBI Taxonomy" id="322159"/>
    <lineage>
        <taxon>Bacteria</taxon>
        <taxon>Bacillati</taxon>
        <taxon>Bacillota</taxon>
        <taxon>Bacilli</taxon>
        <taxon>Lactobacillales</taxon>
        <taxon>Streptococcaceae</taxon>
        <taxon>Streptococcus</taxon>
    </lineage>
</organism>
<name>RL17_STRTD</name>
<proteinExistence type="inferred from homology"/>
<accession>Q03IH8</accession>
<dbReference type="EMBL" id="CP000419">
    <property type="protein sequence ID" value="ABJ66994.1"/>
    <property type="molecule type" value="Genomic_DNA"/>
</dbReference>
<dbReference type="RefSeq" id="WP_002952134.1">
    <property type="nucleotide sequence ID" value="NZ_CP086001.1"/>
</dbReference>
<dbReference type="SMR" id="Q03IH8"/>
<dbReference type="GeneID" id="66899635"/>
<dbReference type="KEGG" id="ste:STER_1880"/>
<dbReference type="HOGENOM" id="CLU_074407_2_2_9"/>
<dbReference type="GO" id="GO:0022625">
    <property type="term" value="C:cytosolic large ribosomal subunit"/>
    <property type="evidence" value="ECO:0007669"/>
    <property type="project" value="TreeGrafter"/>
</dbReference>
<dbReference type="GO" id="GO:0003735">
    <property type="term" value="F:structural constituent of ribosome"/>
    <property type="evidence" value="ECO:0007669"/>
    <property type="project" value="InterPro"/>
</dbReference>
<dbReference type="GO" id="GO:0006412">
    <property type="term" value="P:translation"/>
    <property type="evidence" value="ECO:0007669"/>
    <property type="project" value="UniProtKB-UniRule"/>
</dbReference>
<dbReference type="FunFam" id="3.90.1030.10:FF:000002">
    <property type="entry name" value="50S ribosomal protein L17"/>
    <property type="match status" value="1"/>
</dbReference>
<dbReference type="Gene3D" id="3.90.1030.10">
    <property type="entry name" value="Ribosomal protein L17"/>
    <property type="match status" value="1"/>
</dbReference>
<dbReference type="HAMAP" id="MF_01368">
    <property type="entry name" value="Ribosomal_bL17"/>
    <property type="match status" value="1"/>
</dbReference>
<dbReference type="InterPro" id="IPR000456">
    <property type="entry name" value="Ribosomal_bL17"/>
</dbReference>
<dbReference type="InterPro" id="IPR047859">
    <property type="entry name" value="Ribosomal_bL17_CS"/>
</dbReference>
<dbReference type="InterPro" id="IPR036373">
    <property type="entry name" value="Ribosomal_bL17_sf"/>
</dbReference>
<dbReference type="NCBIfam" id="TIGR00059">
    <property type="entry name" value="L17"/>
    <property type="match status" value="1"/>
</dbReference>
<dbReference type="PANTHER" id="PTHR14413:SF16">
    <property type="entry name" value="LARGE RIBOSOMAL SUBUNIT PROTEIN BL17M"/>
    <property type="match status" value="1"/>
</dbReference>
<dbReference type="PANTHER" id="PTHR14413">
    <property type="entry name" value="RIBOSOMAL PROTEIN L17"/>
    <property type="match status" value="1"/>
</dbReference>
<dbReference type="Pfam" id="PF01196">
    <property type="entry name" value="Ribosomal_L17"/>
    <property type="match status" value="1"/>
</dbReference>
<dbReference type="SUPFAM" id="SSF64263">
    <property type="entry name" value="Prokaryotic ribosomal protein L17"/>
    <property type="match status" value="1"/>
</dbReference>
<dbReference type="PROSITE" id="PS01167">
    <property type="entry name" value="RIBOSOMAL_L17"/>
    <property type="match status" value="1"/>
</dbReference>
<sequence length="128" mass="14461">MAYRKLGRTSSQRKAVLRDLTTDLIINEAIVTTEARAKEIRKTVEKMITLGKRGDLHARRQAAAFVRNEIASESYDEATDKYTSTTALQKLFSEIAPRYTERNGGYTRILKTEPRRGDAAPMAIIELV</sequence>
<protein>
    <recommendedName>
        <fullName evidence="1">Large ribosomal subunit protein bL17</fullName>
    </recommendedName>
    <alternativeName>
        <fullName evidence="2">50S ribosomal protein L17</fullName>
    </alternativeName>
</protein>
<comment type="subunit">
    <text evidence="1">Part of the 50S ribosomal subunit. Contacts protein L32.</text>
</comment>
<comment type="similarity">
    <text evidence="1">Belongs to the bacterial ribosomal protein bL17 family.</text>
</comment>
<feature type="chain" id="PRO_1000055973" description="Large ribosomal subunit protein bL17">
    <location>
        <begin position="1"/>
        <end position="128"/>
    </location>
</feature>
<gene>
    <name evidence="1" type="primary">rplQ</name>
    <name type="ordered locus">STER_1880</name>
</gene>
<evidence type="ECO:0000255" key="1">
    <source>
        <dbReference type="HAMAP-Rule" id="MF_01368"/>
    </source>
</evidence>
<evidence type="ECO:0000305" key="2"/>
<reference key="1">
    <citation type="journal article" date="2006" name="Proc. Natl. Acad. Sci. U.S.A.">
        <title>Comparative genomics of the lactic acid bacteria.</title>
        <authorList>
            <person name="Makarova K.S."/>
            <person name="Slesarev A."/>
            <person name="Wolf Y.I."/>
            <person name="Sorokin A."/>
            <person name="Mirkin B."/>
            <person name="Koonin E.V."/>
            <person name="Pavlov A."/>
            <person name="Pavlova N."/>
            <person name="Karamychev V."/>
            <person name="Polouchine N."/>
            <person name="Shakhova V."/>
            <person name="Grigoriev I."/>
            <person name="Lou Y."/>
            <person name="Rohksar D."/>
            <person name="Lucas S."/>
            <person name="Huang K."/>
            <person name="Goodstein D.M."/>
            <person name="Hawkins T."/>
            <person name="Plengvidhya V."/>
            <person name="Welker D."/>
            <person name="Hughes J."/>
            <person name="Goh Y."/>
            <person name="Benson A."/>
            <person name="Baldwin K."/>
            <person name="Lee J.-H."/>
            <person name="Diaz-Muniz I."/>
            <person name="Dosti B."/>
            <person name="Smeianov V."/>
            <person name="Wechter W."/>
            <person name="Barabote R."/>
            <person name="Lorca G."/>
            <person name="Altermann E."/>
            <person name="Barrangou R."/>
            <person name="Ganesan B."/>
            <person name="Xie Y."/>
            <person name="Rawsthorne H."/>
            <person name="Tamir D."/>
            <person name="Parker C."/>
            <person name="Breidt F."/>
            <person name="Broadbent J.R."/>
            <person name="Hutkins R."/>
            <person name="O'Sullivan D."/>
            <person name="Steele J."/>
            <person name="Unlu G."/>
            <person name="Saier M.H. Jr."/>
            <person name="Klaenhammer T."/>
            <person name="Richardson P."/>
            <person name="Kozyavkin S."/>
            <person name="Weimer B.C."/>
            <person name="Mills D.A."/>
        </authorList>
    </citation>
    <scope>NUCLEOTIDE SEQUENCE [LARGE SCALE GENOMIC DNA]</scope>
    <source>
        <strain>ATCC BAA-491 / LMD-9</strain>
    </source>
</reference>